<sequence length="129" mass="14084">MGKAKAPRRLADNEARAVLRTIRISPQKLNLVAALIRGKKVATALSDLEFSAKRISGTVKKTLESAIANAENNHDLDVDALVVAEAYVGKSIVMKRFHARGRGRASRIEKPFSHLTIVVREVEEKGEAA</sequence>
<gene>
    <name evidence="1" type="primary">rplV</name>
    <name type="ordered locus">mlr0298</name>
</gene>
<protein>
    <recommendedName>
        <fullName evidence="1">Large ribosomal subunit protein uL22</fullName>
    </recommendedName>
    <alternativeName>
        <fullName evidence="2">50S ribosomal protein L22</fullName>
    </alternativeName>
</protein>
<feature type="chain" id="PRO_0000125209" description="Large ribosomal subunit protein uL22">
    <location>
        <begin position="1"/>
        <end position="129"/>
    </location>
</feature>
<keyword id="KW-0687">Ribonucleoprotein</keyword>
<keyword id="KW-0689">Ribosomal protein</keyword>
<keyword id="KW-0694">RNA-binding</keyword>
<keyword id="KW-0699">rRNA-binding</keyword>
<reference key="1">
    <citation type="journal article" date="2000" name="DNA Res.">
        <title>Complete genome structure of the nitrogen-fixing symbiotic bacterium Mesorhizobium loti.</title>
        <authorList>
            <person name="Kaneko T."/>
            <person name="Nakamura Y."/>
            <person name="Sato S."/>
            <person name="Asamizu E."/>
            <person name="Kato T."/>
            <person name="Sasamoto S."/>
            <person name="Watanabe A."/>
            <person name="Idesawa K."/>
            <person name="Ishikawa A."/>
            <person name="Kawashima K."/>
            <person name="Kimura T."/>
            <person name="Kishida Y."/>
            <person name="Kiyokawa C."/>
            <person name="Kohara M."/>
            <person name="Matsumoto M."/>
            <person name="Matsuno A."/>
            <person name="Mochizuki Y."/>
            <person name="Nakayama S."/>
            <person name="Nakazaki N."/>
            <person name="Shimpo S."/>
            <person name="Sugimoto M."/>
            <person name="Takeuchi C."/>
            <person name="Yamada M."/>
            <person name="Tabata S."/>
        </authorList>
    </citation>
    <scope>NUCLEOTIDE SEQUENCE [LARGE SCALE GENOMIC DNA]</scope>
    <source>
        <strain>LMG 29417 / CECT 9101 / MAFF 303099</strain>
    </source>
</reference>
<accession>Q98N52</accession>
<evidence type="ECO:0000255" key="1">
    <source>
        <dbReference type="HAMAP-Rule" id="MF_01331"/>
    </source>
</evidence>
<evidence type="ECO:0000305" key="2"/>
<name>RL22_RHILO</name>
<organism>
    <name type="scientific">Mesorhizobium japonicum (strain LMG 29417 / CECT 9101 / MAFF 303099)</name>
    <name type="common">Mesorhizobium loti (strain MAFF 303099)</name>
    <dbReference type="NCBI Taxonomy" id="266835"/>
    <lineage>
        <taxon>Bacteria</taxon>
        <taxon>Pseudomonadati</taxon>
        <taxon>Pseudomonadota</taxon>
        <taxon>Alphaproteobacteria</taxon>
        <taxon>Hyphomicrobiales</taxon>
        <taxon>Phyllobacteriaceae</taxon>
        <taxon>Mesorhizobium</taxon>
    </lineage>
</organism>
<comment type="function">
    <text evidence="1">This protein binds specifically to 23S rRNA; its binding is stimulated by other ribosomal proteins, e.g. L4, L17, and L20. It is important during the early stages of 50S assembly. It makes multiple contacts with different domains of the 23S rRNA in the assembled 50S subunit and ribosome (By similarity).</text>
</comment>
<comment type="function">
    <text evidence="1">The globular domain of the protein is located near the polypeptide exit tunnel on the outside of the subunit, while an extended beta-hairpin is found that lines the wall of the exit tunnel in the center of the 70S ribosome.</text>
</comment>
<comment type="subunit">
    <text evidence="1">Part of the 50S ribosomal subunit.</text>
</comment>
<comment type="similarity">
    <text evidence="1">Belongs to the universal ribosomal protein uL22 family.</text>
</comment>
<proteinExistence type="inferred from homology"/>
<dbReference type="EMBL" id="BA000012">
    <property type="protein sequence ID" value="BAB47911.1"/>
    <property type="molecule type" value="Genomic_DNA"/>
</dbReference>
<dbReference type="RefSeq" id="WP_010909277.1">
    <property type="nucleotide sequence ID" value="NC_002678.2"/>
</dbReference>
<dbReference type="SMR" id="Q98N52"/>
<dbReference type="GeneID" id="90991577"/>
<dbReference type="KEGG" id="mlo:mlr0298"/>
<dbReference type="eggNOG" id="COG0091">
    <property type="taxonomic scope" value="Bacteria"/>
</dbReference>
<dbReference type="HOGENOM" id="CLU_083987_3_0_5"/>
<dbReference type="Proteomes" id="UP000000552">
    <property type="component" value="Chromosome"/>
</dbReference>
<dbReference type="GO" id="GO:0022625">
    <property type="term" value="C:cytosolic large ribosomal subunit"/>
    <property type="evidence" value="ECO:0007669"/>
    <property type="project" value="TreeGrafter"/>
</dbReference>
<dbReference type="GO" id="GO:0019843">
    <property type="term" value="F:rRNA binding"/>
    <property type="evidence" value="ECO:0007669"/>
    <property type="project" value="UniProtKB-UniRule"/>
</dbReference>
<dbReference type="GO" id="GO:0003735">
    <property type="term" value="F:structural constituent of ribosome"/>
    <property type="evidence" value="ECO:0007669"/>
    <property type="project" value="InterPro"/>
</dbReference>
<dbReference type="GO" id="GO:0006412">
    <property type="term" value="P:translation"/>
    <property type="evidence" value="ECO:0007669"/>
    <property type="project" value="UniProtKB-UniRule"/>
</dbReference>
<dbReference type="CDD" id="cd00336">
    <property type="entry name" value="Ribosomal_L22"/>
    <property type="match status" value="1"/>
</dbReference>
<dbReference type="Gene3D" id="3.90.470.10">
    <property type="entry name" value="Ribosomal protein L22/L17"/>
    <property type="match status" value="1"/>
</dbReference>
<dbReference type="HAMAP" id="MF_01331_B">
    <property type="entry name" value="Ribosomal_uL22_B"/>
    <property type="match status" value="1"/>
</dbReference>
<dbReference type="InterPro" id="IPR001063">
    <property type="entry name" value="Ribosomal_uL22"/>
</dbReference>
<dbReference type="InterPro" id="IPR005727">
    <property type="entry name" value="Ribosomal_uL22_bac/chlpt-type"/>
</dbReference>
<dbReference type="InterPro" id="IPR047867">
    <property type="entry name" value="Ribosomal_uL22_bac/org-type"/>
</dbReference>
<dbReference type="InterPro" id="IPR018260">
    <property type="entry name" value="Ribosomal_uL22_CS"/>
</dbReference>
<dbReference type="InterPro" id="IPR036394">
    <property type="entry name" value="Ribosomal_uL22_sf"/>
</dbReference>
<dbReference type="NCBIfam" id="TIGR01044">
    <property type="entry name" value="rplV_bact"/>
    <property type="match status" value="1"/>
</dbReference>
<dbReference type="PANTHER" id="PTHR13501">
    <property type="entry name" value="CHLOROPLAST 50S RIBOSOMAL PROTEIN L22-RELATED"/>
    <property type="match status" value="1"/>
</dbReference>
<dbReference type="PANTHER" id="PTHR13501:SF8">
    <property type="entry name" value="LARGE RIBOSOMAL SUBUNIT PROTEIN UL22M"/>
    <property type="match status" value="1"/>
</dbReference>
<dbReference type="Pfam" id="PF00237">
    <property type="entry name" value="Ribosomal_L22"/>
    <property type="match status" value="1"/>
</dbReference>
<dbReference type="SUPFAM" id="SSF54843">
    <property type="entry name" value="Ribosomal protein L22"/>
    <property type="match status" value="1"/>
</dbReference>
<dbReference type="PROSITE" id="PS00464">
    <property type="entry name" value="RIBOSOMAL_L22"/>
    <property type="match status" value="1"/>
</dbReference>